<sequence length="219" mass="24293">MQHTDDMVQERRGMVELLRRYGIRNSRVLDAFLTVKRHLFVDGESRMFAYHDSALPIGFGQTISQPYTVAYMMELLVENCSSGKVLEIGTGSGFQAAILDALGYRVFTIECVAGLYELASARFEKLGIPVQSRLGDGTLGWPEEAPFDAIIVTAAAPHEPRELMSQLADGGVLILPLGSLASQQMTVIRRKGNRFEHEGFDHFAFVPLLGREGWPDSDE</sequence>
<keyword id="KW-0963">Cytoplasm</keyword>
<keyword id="KW-0489">Methyltransferase</keyword>
<keyword id="KW-0949">S-adenosyl-L-methionine</keyword>
<keyword id="KW-0808">Transferase</keyword>
<gene>
    <name evidence="1" type="primary">pcm</name>
    <name type="ordered locus">Cpar_1832</name>
</gene>
<name>PIMT_CHLP8</name>
<dbReference type="EC" id="2.1.1.77" evidence="1"/>
<dbReference type="EMBL" id="CP001099">
    <property type="protein sequence ID" value="ACF12224.1"/>
    <property type="molecule type" value="Genomic_DNA"/>
</dbReference>
<dbReference type="RefSeq" id="WP_012503057.1">
    <property type="nucleotide sequence ID" value="NC_011027.1"/>
</dbReference>
<dbReference type="SMR" id="B3QQM1"/>
<dbReference type="STRING" id="517417.Cpar_1832"/>
<dbReference type="KEGG" id="cpc:Cpar_1832"/>
<dbReference type="eggNOG" id="COG2518">
    <property type="taxonomic scope" value="Bacteria"/>
</dbReference>
<dbReference type="HOGENOM" id="CLU_055432_2_0_10"/>
<dbReference type="OrthoDB" id="9810066at2"/>
<dbReference type="Proteomes" id="UP000008811">
    <property type="component" value="Chromosome"/>
</dbReference>
<dbReference type="GO" id="GO:0005737">
    <property type="term" value="C:cytoplasm"/>
    <property type="evidence" value="ECO:0007669"/>
    <property type="project" value="UniProtKB-SubCell"/>
</dbReference>
<dbReference type="GO" id="GO:0004719">
    <property type="term" value="F:protein-L-isoaspartate (D-aspartate) O-methyltransferase activity"/>
    <property type="evidence" value="ECO:0007669"/>
    <property type="project" value="UniProtKB-UniRule"/>
</dbReference>
<dbReference type="GO" id="GO:0032259">
    <property type="term" value="P:methylation"/>
    <property type="evidence" value="ECO:0007669"/>
    <property type="project" value="UniProtKB-KW"/>
</dbReference>
<dbReference type="GO" id="GO:0036211">
    <property type="term" value="P:protein modification process"/>
    <property type="evidence" value="ECO:0007669"/>
    <property type="project" value="UniProtKB-UniRule"/>
</dbReference>
<dbReference type="GO" id="GO:0030091">
    <property type="term" value="P:protein repair"/>
    <property type="evidence" value="ECO:0007669"/>
    <property type="project" value="UniProtKB-UniRule"/>
</dbReference>
<dbReference type="CDD" id="cd02440">
    <property type="entry name" value="AdoMet_MTases"/>
    <property type="match status" value="1"/>
</dbReference>
<dbReference type="FunFam" id="3.40.50.150:FF:000010">
    <property type="entry name" value="Protein-L-isoaspartate O-methyltransferase"/>
    <property type="match status" value="1"/>
</dbReference>
<dbReference type="Gene3D" id="3.40.50.150">
    <property type="entry name" value="Vaccinia Virus protein VP39"/>
    <property type="match status" value="1"/>
</dbReference>
<dbReference type="HAMAP" id="MF_00090">
    <property type="entry name" value="PIMT"/>
    <property type="match status" value="1"/>
</dbReference>
<dbReference type="InterPro" id="IPR000682">
    <property type="entry name" value="PCMT"/>
</dbReference>
<dbReference type="InterPro" id="IPR029063">
    <property type="entry name" value="SAM-dependent_MTases_sf"/>
</dbReference>
<dbReference type="NCBIfam" id="TIGR00080">
    <property type="entry name" value="pimt"/>
    <property type="match status" value="1"/>
</dbReference>
<dbReference type="NCBIfam" id="NF001453">
    <property type="entry name" value="PRK00312.1"/>
    <property type="match status" value="1"/>
</dbReference>
<dbReference type="PANTHER" id="PTHR11579">
    <property type="entry name" value="PROTEIN-L-ISOASPARTATE O-METHYLTRANSFERASE"/>
    <property type="match status" value="1"/>
</dbReference>
<dbReference type="PANTHER" id="PTHR11579:SF0">
    <property type="entry name" value="PROTEIN-L-ISOASPARTATE(D-ASPARTATE) O-METHYLTRANSFERASE"/>
    <property type="match status" value="1"/>
</dbReference>
<dbReference type="Pfam" id="PF01135">
    <property type="entry name" value="PCMT"/>
    <property type="match status" value="1"/>
</dbReference>
<dbReference type="SUPFAM" id="SSF53335">
    <property type="entry name" value="S-adenosyl-L-methionine-dependent methyltransferases"/>
    <property type="match status" value="1"/>
</dbReference>
<dbReference type="PROSITE" id="PS01279">
    <property type="entry name" value="PCMT"/>
    <property type="match status" value="1"/>
</dbReference>
<feature type="chain" id="PRO_1000202660" description="Protein-L-isoaspartate O-methyltransferase">
    <location>
        <begin position="1"/>
        <end position="219"/>
    </location>
</feature>
<feature type="active site" evidence="1">
    <location>
        <position position="64"/>
    </location>
</feature>
<organism>
    <name type="scientific">Chlorobaculum parvum (strain DSM 263 / NCIMB 8327)</name>
    <name type="common">Chlorobium vibrioforme subsp. thiosulfatophilum</name>
    <dbReference type="NCBI Taxonomy" id="517417"/>
    <lineage>
        <taxon>Bacteria</taxon>
        <taxon>Pseudomonadati</taxon>
        <taxon>Chlorobiota</taxon>
        <taxon>Chlorobiia</taxon>
        <taxon>Chlorobiales</taxon>
        <taxon>Chlorobiaceae</taxon>
        <taxon>Chlorobaculum</taxon>
    </lineage>
</organism>
<protein>
    <recommendedName>
        <fullName evidence="1">Protein-L-isoaspartate O-methyltransferase</fullName>
        <ecNumber evidence="1">2.1.1.77</ecNumber>
    </recommendedName>
    <alternativeName>
        <fullName evidence="1">L-isoaspartyl protein carboxyl methyltransferase</fullName>
    </alternativeName>
    <alternativeName>
        <fullName evidence="1">Protein L-isoaspartyl methyltransferase</fullName>
    </alternativeName>
    <alternativeName>
        <fullName evidence="1">Protein-beta-aspartate methyltransferase</fullName>
        <shortName evidence="1">PIMT</shortName>
    </alternativeName>
</protein>
<accession>B3QQM1</accession>
<evidence type="ECO:0000255" key="1">
    <source>
        <dbReference type="HAMAP-Rule" id="MF_00090"/>
    </source>
</evidence>
<comment type="function">
    <text evidence="1">Catalyzes the methyl esterification of L-isoaspartyl residues in peptides and proteins that result from spontaneous decomposition of normal L-aspartyl and L-asparaginyl residues. It plays a role in the repair and/or degradation of damaged proteins.</text>
</comment>
<comment type="catalytic activity">
    <reaction evidence="1">
        <text>[protein]-L-isoaspartate + S-adenosyl-L-methionine = [protein]-L-isoaspartate alpha-methyl ester + S-adenosyl-L-homocysteine</text>
        <dbReference type="Rhea" id="RHEA:12705"/>
        <dbReference type="Rhea" id="RHEA-COMP:12143"/>
        <dbReference type="Rhea" id="RHEA-COMP:12144"/>
        <dbReference type="ChEBI" id="CHEBI:57856"/>
        <dbReference type="ChEBI" id="CHEBI:59789"/>
        <dbReference type="ChEBI" id="CHEBI:90596"/>
        <dbReference type="ChEBI" id="CHEBI:90598"/>
        <dbReference type="EC" id="2.1.1.77"/>
    </reaction>
</comment>
<comment type="subcellular location">
    <subcellularLocation>
        <location evidence="1">Cytoplasm</location>
    </subcellularLocation>
</comment>
<comment type="similarity">
    <text evidence="1">Belongs to the methyltransferase superfamily. L-isoaspartyl/D-aspartyl protein methyltransferase family.</text>
</comment>
<proteinExistence type="inferred from homology"/>
<reference key="1">
    <citation type="submission" date="2008-06" db="EMBL/GenBank/DDBJ databases">
        <title>Complete sequence of Chlorobaculum parvum NCIB 8327.</title>
        <authorList>
            <consortium name="US DOE Joint Genome Institute"/>
            <person name="Lucas S."/>
            <person name="Copeland A."/>
            <person name="Lapidus A."/>
            <person name="Glavina del Rio T."/>
            <person name="Dalin E."/>
            <person name="Tice H."/>
            <person name="Bruce D."/>
            <person name="Goodwin L."/>
            <person name="Pitluck S."/>
            <person name="Schmutz J."/>
            <person name="Larimer F."/>
            <person name="Land M."/>
            <person name="Hauser L."/>
            <person name="Kyrpides N."/>
            <person name="Mikhailova N."/>
            <person name="Zhao F."/>
            <person name="Li T."/>
            <person name="Liu Z."/>
            <person name="Overmann J."/>
            <person name="Bryant D.A."/>
            <person name="Richardson P."/>
        </authorList>
    </citation>
    <scope>NUCLEOTIDE SEQUENCE [LARGE SCALE GENOMIC DNA]</scope>
    <source>
        <strain>DSM 263 / NCIMB 8327</strain>
    </source>
</reference>